<proteinExistence type="evidence at protein level"/>
<organism>
    <name type="scientific">Drosophila melanogaster</name>
    <name type="common">Fruit fly</name>
    <dbReference type="NCBI Taxonomy" id="7227"/>
    <lineage>
        <taxon>Eukaryota</taxon>
        <taxon>Metazoa</taxon>
        <taxon>Ecdysozoa</taxon>
        <taxon>Arthropoda</taxon>
        <taxon>Hexapoda</taxon>
        <taxon>Insecta</taxon>
        <taxon>Pterygota</taxon>
        <taxon>Neoptera</taxon>
        <taxon>Endopterygota</taxon>
        <taxon>Diptera</taxon>
        <taxon>Brachycera</taxon>
        <taxon>Muscomorpha</taxon>
        <taxon>Ephydroidea</taxon>
        <taxon>Drosophilidae</taxon>
        <taxon>Drosophila</taxon>
        <taxon>Sophophora</taxon>
    </lineage>
</organism>
<name>CAF1_DROME</name>
<evidence type="ECO:0000269" key="1">
    <source>
    </source>
</evidence>
<evidence type="ECO:0000269" key="2">
    <source>
    </source>
</evidence>
<evidence type="ECO:0000269" key="3">
    <source>
    </source>
</evidence>
<evidence type="ECO:0000269" key="4">
    <source>
    </source>
</evidence>
<evidence type="ECO:0000269" key="5">
    <source>
    </source>
</evidence>
<evidence type="ECO:0000269" key="6">
    <source>
    </source>
</evidence>
<evidence type="ECO:0000269" key="7">
    <source>
    </source>
</evidence>
<evidence type="ECO:0000269" key="8">
    <source>
    </source>
</evidence>
<evidence type="ECO:0000269" key="9">
    <source>
    </source>
</evidence>
<evidence type="ECO:0000269" key="10">
    <source>
    </source>
</evidence>
<evidence type="ECO:0000269" key="11">
    <source>
    </source>
</evidence>
<evidence type="ECO:0000269" key="12">
    <source>
    </source>
</evidence>
<evidence type="ECO:0000269" key="13">
    <source>
    </source>
</evidence>
<evidence type="ECO:0000269" key="14">
    <source>
    </source>
</evidence>
<evidence type="ECO:0000269" key="15">
    <source>
    </source>
</evidence>
<evidence type="ECO:0000269" key="16">
    <source>
    </source>
</evidence>
<evidence type="ECO:0000269" key="17">
    <source>
    </source>
</evidence>
<evidence type="ECO:0000303" key="18">
    <source>
    </source>
</evidence>
<evidence type="ECO:0000303" key="19">
    <source>
    </source>
</evidence>
<evidence type="ECO:0000305" key="20"/>
<evidence type="ECO:0000312" key="21">
    <source>
        <dbReference type="FlyBase" id="FBgn0263979"/>
    </source>
</evidence>
<evidence type="ECO:0007829" key="22">
    <source>
        <dbReference type="PDB" id="2XYI"/>
    </source>
</evidence>
<evidence type="ECO:0007829" key="23">
    <source>
        <dbReference type="PDB" id="2YB8"/>
    </source>
</evidence>
<evidence type="ECO:0007829" key="24">
    <source>
        <dbReference type="PDB" id="3C99"/>
    </source>
</evidence>
<gene>
    <name evidence="21" type="primary">Caf1-55</name>
    <name evidence="21" type="synonym">Caf1</name>
    <name evidence="21" type="ORF">CG4236</name>
</gene>
<sequence length="430" mass="48635">MVDRSDNAAESFDDAVEERVINEEYKIWKKNTPFLYDLVMTHALEWPSLTAQWLPDVTKQDGKDYSVHRLILGTHTSDEQNHLLIASVQLPSEDAQFDGSHYDNEKGEFGGFGSVCGKIEIEIKINHEGEVNRARYMPQNACVIATKTPSSDVLVFDYTKHPSKPEPSGECQPDLRLRGHQKEGYGLSWNPNLNGYLLSASDDHTICLWDINATPKEHRVIDAKNIFTGHTAVVEDVAWHLLHESLFGSVADDQKLMIWDTRNNNTSKPSHTVDAHTAEVNCLSFNPYSEFILATGSADKTVALWDLRNLKLKLHSFESHKDEIFQVQWSPHNETILASSGTDRRLHVWDLSKIGEEQSTEDAEDGPPELLFIHGGHTAKISDFSWNPNEPWIICSVSEDNIMQVWQMAENVYNDEEPEIPASELETNTA</sequence>
<dbReference type="EMBL" id="U62388">
    <property type="protein sequence ID" value="AAB37257.1"/>
    <property type="molecule type" value="mRNA"/>
</dbReference>
<dbReference type="EMBL" id="AM294392">
    <property type="protein sequence ID" value="CAL26322.1"/>
    <property type="molecule type" value="Genomic_DNA"/>
</dbReference>
<dbReference type="EMBL" id="AM294393">
    <property type="protein sequence ID" value="CAL26323.1"/>
    <property type="molecule type" value="Genomic_DNA"/>
</dbReference>
<dbReference type="EMBL" id="AM294394">
    <property type="protein sequence ID" value="CAL26324.1"/>
    <property type="molecule type" value="Genomic_DNA"/>
</dbReference>
<dbReference type="EMBL" id="AM294395">
    <property type="protein sequence ID" value="CAL26325.1"/>
    <property type="molecule type" value="Genomic_DNA"/>
</dbReference>
<dbReference type="EMBL" id="AM294396">
    <property type="protein sequence ID" value="CAL26330.1"/>
    <property type="molecule type" value="Genomic_DNA"/>
</dbReference>
<dbReference type="EMBL" id="AM294397">
    <property type="protein sequence ID" value="CAL26335.1"/>
    <property type="molecule type" value="Genomic_DNA"/>
</dbReference>
<dbReference type="EMBL" id="AM294398">
    <property type="protein sequence ID" value="CAL26337.1"/>
    <property type="molecule type" value="Genomic_DNA"/>
</dbReference>
<dbReference type="EMBL" id="AM294399">
    <property type="protein sequence ID" value="CAL26338.1"/>
    <property type="molecule type" value="Genomic_DNA"/>
</dbReference>
<dbReference type="EMBL" id="AM294400">
    <property type="protein sequence ID" value="CAL26339.1"/>
    <property type="molecule type" value="Genomic_DNA"/>
</dbReference>
<dbReference type="EMBL" id="AM294401">
    <property type="protein sequence ID" value="CAL26340.1"/>
    <property type="molecule type" value="Genomic_DNA"/>
</dbReference>
<dbReference type="EMBL" id="AM294402">
    <property type="protein sequence ID" value="CAL26341.1"/>
    <property type="molecule type" value="Genomic_DNA"/>
</dbReference>
<dbReference type="EMBL" id="AM294403">
    <property type="protein sequence ID" value="CAL26342.1"/>
    <property type="molecule type" value="Genomic_DNA"/>
</dbReference>
<dbReference type="EMBL" id="AE014297">
    <property type="protein sequence ID" value="AAF55146.1"/>
    <property type="molecule type" value="Genomic_DNA"/>
</dbReference>
<dbReference type="EMBL" id="AY061408">
    <property type="protein sequence ID" value="AAL28956.1"/>
    <property type="molecule type" value="mRNA"/>
</dbReference>
<dbReference type="RefSeq" id="NP_524354.1">
    <property type="nucleotide sequence ID" value="NM_079630.4"/>
</dbReference>
<dbReference type="PDB" id="2XYI">
    <property type="method" value="X-ray"/>
    <property type="resolution" value="1.75 A"/>
    <property type="chains" value="A=1-430"/>
</dbReference>
<dbReference type="PDB" id="2YB8">
    <property type="method" value="X-ray"/>
    <property type="resolution" value="2.30 A"/>
    <property type="chains" value="B=1-418"/>
</dbReference>
<dbReference type="PDB" id="2YBA">
    <property type="method" value="X-ray"/>
    <property type="resolution" value="2.55 A"/>
    <property type="chains" value="A/B=1-418"/>
</dbReference>
<dbReference type="PDB" id="3C99">
    <property type="method" value="X-ray"/>
    <property type="resolution" value="2.90 A"/>
    <property type="chains" value="A=1-430"/>
</dbReference>
<dbReference type="PDB" id="3C9C">
    <property type="method" value="X-ray"/>
    <property type="resolution" value="3.20 A"/>
    <property type="chains" value="A=1-430"/>
</dbReference>
<dbReference type="PDBsum" id="2XYI"/>
<dbReference type="PDBsum" id="2YB8"/>
<dbReference type="PDBsum" id="2YBA"/>
<dbReference type="PDBsum" id="3C99"/>
<dbReference type="PDBsum" id="3C9C"/>
<dbReference type="SMR" id="Q24572"/>
<dbReference type="BioGRID" id="66900">
    <property type="interactions" value="76"/>
</dbReference>
<dbReference type="ComplexPortal" id="CPX-2355">
    <property type="entry name" value="Mi2/NuRD nucleosome remodeling and deacetylase complex"/>
</dbReference>
<dbReference type="ComplexPortal" id="CPX-2362">
    <property type="entry name" value="NuRF nucleosome remodelling factor"/>
</dbReference>
<dbReference type="ComplexPortal" id="CPX-2374">
    <property type="entry name" value="drEAM transcriptional repressor complex, Rbf variant"/>
</dbReference>
<dbReference type="ComplexPortal" id="CPX-2376">
    <property type="entry name" value="drEAM transcriptional repressor complex, Rbf2 variant"/>
</dbReference>
<dbReference type="ComplexPortal" id="CPX-2378">
    <property type="entry name" value="Myb-MuvB transcriptional activation complex"/>
</dbReference>
<dbReference type="ComplexPortal" id="CPX-2380">
    <property type="entry name" value="Testis-specific meiotic arrest complex"/>
</dbReference>
<dbReference type="ComplexPortal" id="CPX-2591">
    <property type="entry name" value="Polycomb repressive complex 2, Pcl variant"/>
</dbReference>
<dbReference type="ComplexPortal" id="CPX-2603">
    <property type="entry name" value="Polycomb repressive complex 2, Jarid2-jing variant"/>
</dbReference>
<dbReference type="ComplexPortal" id="CPX-2763">
    <property type="entry name" value="Chromatin assembly factor 1 complex"/>
</dbReference>
<dbReference type="DIP" id="DIP-23697N"/>
<dbReference type="FunCoup" id="Q24572">
    <property type="interactions" value="2690"/>
</dbReference>
<dbReference type="IntAct" id="Q24572">
    <property type="interactions" value="26"/>
</dbReference>
<dbReference type="MINT" id="Q24572"/>
<dbReference type="STRING" id="7227.FBpp0082511"/>
<dbReference type="iPTMnet" id="Q24572"/>
<dbReference type="PaxDb" id="7227-FBpp0082511"/>
<dbReference type="DNASU" id="41836"/>
<dbReference type="EnsemblMetazoa" id="FBtr0083052">
    <property type="protein sequence ID" value="FBpp0082511"/>
    <property type="gene ID" value="FBgn0263979"/>
</dbReference>
<dbReference type="GeneID" id="41836"/>
<dbReference type="KEGG" id="dme:Dmel_CG4236"/>
<dbReference type="AGR" id="FB:FBgn0263979"/>
<dbReference type="CTD" id="41836"/>
<dbReference type="FlyBase" id="FBgn0263979">
    <property type="gene designation" value="Caf1-55"/>
</dbReference>
<dbReference type="VEuPathDB" id="VectorBase:FBgn0263979"/>
<dbReference type="eggNOG" id="KOG0264">
    <property type="taxonomic scope" value="Eukaryota"/>
</dbReference>
<dbReference type="GeneTree" id="ENSGT00940000154748"/>
<dbReference type="InParanoid" id="Q24572"/>
<dbReference type="OMA" id="PHEEGCL"/>
<dbReference type="OrthoDB" id="427795at2759"/>
<dbReference type="PhylomeDB" id="Q24572"/>
<dbReference type="Reactome" id="R-DME-1538133">
    <property type="pathway name" value="G0 and Early G1"/>
</dbReference>
<dbReference type="Reactome" id="R-DME-212300">
    <property type="pathway name" value="PRC2 methylates histones and DNA"/>
</dbReference>
<dbReference type="Reactome" id="R-DME-2559580">
    <property type="pathway name" value="Oxidative Stress Induced Senescence"/>
</dbReference>
<dbReference type="Reactome" id="R-DME-3214815">
    <property type="pathway name" value="HDACs deacetylate histones"/>
</dbReference>
<dbReference type="Reactome" id="R-DME-3214847">
    <property type="pathway name" value="HATs acetylate histones"/>
</dbReference>
<dbReference type="Reactome" id="R-DME-6804758">
    <property type="pathway name" value="Regulation of TP53 Activity through Acetylation"/>
</dbReference>
<dbReference type="Reactome" id="R-DME-8943724">
    <property type="pathway name" value="Regulation of PTEN gene transcription"/>
</dbReference>
<dbReference type="Reactome" id="R-DME-8951664">
    <property type="pathway name" value="Neddylation"/>
</dbReference>
<dbReference type="Reactome" id="R-DME-8953750">
    <property type="pathway name" value="Transcriptional Regulation by E2F6"/>
</dbReference>
<dbReference type="SignaLink" id="Q24572"/>
<dbReference type="BioGRID-ORCS" id="41836">
    <property type="hits" value="1 hit in 3 CRISPR screens"/>
</dbReference>
<dbReference type="CD-CODE" id="58FDC23F">
    <property type="entry name" value="PcG body"/>
</dbReference>
<dbReference type="EvolutionaryTrace" id="Q24572"/>
<dbReference type="GenomeRNAi" id="41836"/>
<dbReference type="PRO" id="PR:Q24572"/>
<dbReference type="Proteomes" id="UP000000803">
    <property type="component" value="Chromosome 3R"/>
</dbReference>
<dbReference type="Bgee" id="FBgn0263979">
    <property type="expression patterns" value="Expressed in egg cell and 117 other cell types or tissues"/>
</dbReference>
<dbReference type="ExpressionAtlas" id="Q24572">
    <property type="expression patterns" value="baseline and differential"/>
</dbReference>
<dbReference type="GO" id="GO:0033186">
    <property type="term" value="C:CAF-1 complex"/>
    <property type="evidence" value="ECO:0000314"/>
    <property type="project" value="FlyBase"/>
</dbReference>
<dbReference type="GO" id="GO:0035098">
    <property type="term" value="C:ESC/E(Z) complex"/>
    <property type="evidence" value="ECO:0000314"/>
    <property type="project" value="FlyBase"/>
</dbReference>
<dbReference type="GO" id="GO:0035097">
    <property type="term" value="C:histone methyltransferase complex"/>
    <property type="evidence" value="ECO:0000314"/>
    <property type="project" value="FlyBase"/>
</dbReference>
<dbReference type="GO" id="GO:0031523">
    <property type="term" value="C:Myb complex"/>
    <property type="evidence" value="ECO:0000314"/>
    <property type="project" value="FlyBase"/>
</dbReference>
<dbReference type="GO" id="GO:0005634">
    <property type="term" value="C:nucleus"/>
    <property type="evidence" value="ECO:0000314"/>
    <property type="project" value="FlyBase"/>
</dbReference>
<dbReference type="GO" id="GO:0016581">
    <property type="term" value="C:NuRD complex"/>
    <property type="evidence" value="ECO:0000314"/>
    <property type="project" value="FlyBase"/>
</dbReference>
<dbReference type="GO" id="GO:0016589">
    <property type="term" value="C:NURF complex"/>
    <property type="evidence" value="ECO:0000314"/>
    <property type="project" value="FlyBase"/>
</dbReference>
<dbReference type="GO" id="GO:0005700">
    <property type="term" value="C:polytene chromosome"/>
    <property type="evidence" value="ECO:0000314"/>
    <property type="project" value="FlyBase"/>
</dbReference>
<dbReference type="GO" id="GO:0090575">
    <property type="term" value="C:RNA polymerase II transcription regulator complex"/>
    <property type="evidence" value="ECO:0000314"/>
    <property type="project" value="FlyBase"/>
</dbReference>
<dbReference type="GO" id="GO:0070822">
    <property type="term" value="C:Sin3-type complex"/>
    <property type="evidence" value="ECO:0000314"/>
    <property type="project" value="FlyBase"/>
</dbReference>
<dbReference type="GO" id="GO:0005667">
    <property type="term" value="C:transcription regulator complex"/>
    <property type="evidence" value="ECO:0000353"/>
    <property type="project" value="FlyBase"/>
</dbReference>
<dbReference type="GO" id="GO:0042393">
    <property type="term" value="F:histone binding"/>
    <property type="evidence" value="ECO:0000314"/>
    <property type="project" value="FlyBase"/>
</dbReference>
<dbReference type="GO" id="GO:0042826">
    <property type="term" value="F:histone deacetylase binding"/>
    <property type="evidence" value="ECO:0000314"/>
    <property type="project" value="FlyBase"/>
</dbReference>
<dbReference type="GO" id="GO:0042803">
    <property type="term" value="F:protein homodimerization activity"/>
    <property type="evidence" value="ECO:0000353"/>
    <property type="project" value="FlyBase"/>
</dbReference>
<dbReference type="GO" id="GO:0000976">
    <property type="term" value="F:transcription cis-regulatory region binding"/>
    <property type="evidence" value="ECO:0000314"/>
    <property type="project" value="FlyBase"/>
</dbReference>
<dbReference type="GO" id="GO:0006325">
    <property type="term" value="P:chromatin organization"/>
    <property type="evidence" value="ECO:0000314"/>
    <property type="project" value="FlyBase"/>
</dbReference>
<dbReference type="GO" id="GO:0006338">
    <property type="term" value="P:chromatin remodeling"/>
    <property type="evidence" value="ECO:0000314"/>
    <property type="project" value="FlyBase"/>
</dbReference>
<dbReference type="GO" id="GO:0006335">
    <property type="term" value="P:DNA replication-dependent chromatin assembly"/>
    <property type="evidence" value="ECO:0000314"/>
    <property type="project" value="FlyBase"/>
</dbReference>
<dbReference type="GO" id="GO:0007307">
    <property type="term" value="P:eggshell chorion gene amplification"/>
    <property type="evidence" value="ECO:0000305"/>
    <property type="project" value="FlyBase"/>
</dbReference>
<dbReference type="GO" id="GO:0140718">
    <property type="term" value="P:facultative heterochromatin formation"/>
    <property type="evidence" value="ECO:0000305"/>
    <property type="project" value="FlyBase"/>
</dbReference>
<dbReference type="GO" id="GO:0031507">
    <property type="term" value="P:heterochromatin formation"/>
    <property type="evidence" value="ECO:0000353"/>
    <property type="project" value="FlyBase"/>
</dbReference>
<dbReference type="GO" id="GO:0045892">
    <property type="term" value="P:negative regulation of DNA-templated transcription"/>
    <property type="evidence" value="ECO:0000316"/>
    <property type="project" value="FlyBase"/>
</dbReference>
<dbReference type="GO" id="GO:0000122">
    <property type="term" value="P:negative regulation of transcription by RNA polymerase II"/>
    <property type="evidence" value="ECO:0000315"/>
    <property type="project" value="FlyBase"/>
</dbReference>
<dbReference type="GO" id="GO:0034728">
    <property type="term" value="P:nucleosome organization"/>
    <property type="evidence" value="ECO:0000314"/>
    <property type="project" value="FlyBase"/>
</dbReference>
<dbReference type="GO" id="GO:0045893">
    <property type="term" value="P:positive regulation of DNA-templated transcription"/>
    <property type="evidence" value="ECO:0000314"/>
    <property type="project" value="FlyBase"/>
</dbReference>
<dbReference type="GO" id="GO:0006355">
    <property type="term" value="P:regulation of DNA-templated transcription"/>
    <property type="evidence" value="ECO:0000318"/>
    <property type="project" value="GO_Central"/>
</dbReference>
<dbReference type="GO" id="GO:0007346">
    <property type="term" value="P:regulation of mitotic cell cycle"/>
    <property type="evidence" value="ECO:0000315"/>
    <property type="project" value="FlyBase"/>
</dbReference>
<dbReference type="GO" id="GO:0007379">
    <property type="term" value="P:segment specification"/>
    <property type="evidence" value="ECO:0000315"/>
    <property type="project" value="FlyBase"/>
</dbReference>
<dbReference type="FunFam" id="2.130.10.10:FF:000021">
    <property type="entry name" value="histone-binding protein RBBP4 isoform X1"/>
    <property type="match status" value="1"/>
</dbReference>
<dbReference type="Gene3D" id="2.130.10.10">
    <property type="entry name" value="YVTN repeat-like/Quinoprotein amine dehydrogenase"/>
    <property type="match status" value="1"/>
</dbReference>
<dbReference type="InterPro" id="IPR020472">
    <property type="entry name" value="G-protein_beta_WD-40_rep"/>
</dbReference>
<dbReference type="InterPro" id="IPR022052">
    <property type="entry name" value="Histone-bd_RBBP4-like_N"/>
</dbReference>
<dbReference type="InterPro" id="IPR015943">
    <property type="entry name" value="WD40/YVTN_repeat-like_dom_sf"/>
</dbReference>
<dbReference type="InterPro" id="IPR019775">
    <property type="entry name" value="WD40_repeat_CS"/>
</dbReference>
<dbReference type="InterPro" id="IPR036322">
    <property type="entry name" value="WD40_repeat_dom_sf"/>
</dbReference>
<dbReference type="InterPro" id="IPR001680">
    <property type="entry name" value="WD40_rpt"/>
</dbReference>
<dbReference type="InterPro" id="IPR050459">
    <property type="entry name" value="WD_repeat_RBAP46/RBAP48/MSI1"/>
</dbReference>
<dbReference type="PANTHER" id="PTHR22850">
    <property type="entry name" value="WD40 REPEAT FAMILY"/>
    <property type="match status" value="1"/>
</dbReference>
<dbReference type="Pfam" id="PF12265">
    <property type="entry name" value="CAF1C_H4-bd"/>
    <property type="match status" value="1"/>
</dbReference>
<dbReference type="Pfam" id="PF00400">
    <property type="entry name" value="WD40"/>
    <property type="match status" value="5"/>
</dbReference>
<dbReference type="PRINTS" id="PR00320">
    <property type="entry name" value="GPROTEINBRPT"/>
</dbReference>
<dbReference type="SMART" id="SM00320">
    <property type="entry name" value="WD40"/>
    <property type="match status" value="6"/>
</dbReference>
<dbReference type="SUPFAM" id="SSF50978">
    <property type="entry name" value="WD40 repeat-like"/>
    <property type="match status" value="1"/>
</dbReference>
<dbReference type="PROSITE" id="PS00678">
    <property type="entry name" value="WD_REPEATS_1"/>
    <property type="match status" value="3"/>
</dbReference>
<dbReference type="PROSITE" id="PS50082">
    <property type="entry name" value="WD_REPEATS_2"/>
    <property type="match status" value="5"/>
</dbReference>
<dbReference type="PROSITE" id="PS50294">
    <property type="entry name" value="WD_REPEATS_REGION"/>
    <property type="match status" value="1"/>
</dbReference>
<accession>Q24572</accession>
<accession>A0AP04</accession>
<accession>Q9VFB4</accession>
<feature type="chain" id="PRO_0000050895" description="Chromatin assembly factor 1 p55 subunit">
    <location>
        <begin position="1"/>
        <end position="430"/>
    </location>
</feature>
<feature type="repeat" description="WD 1">
    <location>
        <begin position="126"/>
        <end position="159"/>
    </location>
</feature>
<feature type="repeat" description="WD 2">
    <location>
        <begin position="179"/>
        <end position="210"/>
    </location>
</feature>
<feature type="repeat" description="WD 3">
    <location>
        <begin position="229"/>
        <end position="260"/>
    </location>
</feature>
<feature type="repeat" description="WD 4">
    <location>
        <begin position="275"/>
        <end position="306"/>
    </location>
</feature>
<feature type="repeat" description="WD 5">
    <location>
        <begin position="319"/>
        <end position="350"/>
    </location>
</feature>
<feature type="repeat" description="WD 6">
    <location>
        <begin position="376"/>
        <end position="407"/>
    </location>
</feature>
<feature type="modified residue" description="Phosphoserine" evidence="12">
    <location>
        <position position="11"/>
    </location>
</feature>
<feature type="modified residue" description="Phosphoserine" evidence="13">
    <location>
        <position position="100"/>
    </location>
</feature>
<feature type="helix" evidence="22">
    <location>
        <begin position="12"/>
        <end position="35"/>
    </location>
</feature>
<feature type="strand" evidence="22">
    <location>
        <begin position="36"/>
        <end position="43"/>
    </location>
</feature>
<feature type="strand" evidence="22">
    <location>
        <begin position="51"/>
        <end position="53"/>
    </location>
</feature>
<feature type="strand" evidence="22">
    <location>
        <begin position="66"/>
        <end position="73"/>
    </location>
</feature>
<feature type="strand" evidence="22">
    <location>
        <begin position="77"/>
        <end position="79"/>
    </location>
</feature>
<feature type="strand" evidence="22">
    <location>
        <begin position="81"/>
        <end position="90"/>
    </location>
</feature>
<feature type="strand" evidence="22">
    <location>
        <begin position="119"/>
        <end position="129"/>
    </location>
</feature>
<feature type="strand" evidence="22">
    <location>
        <begin position="132"/>
        <end position="137"/>
    </location>
</feature>
<feature type="strand" evidence="22">
    <location>
        <begin position="140"/>
        <end position="147"/>
    </location>
</feature>
<feature type="strand" evidence="22">
    <location>
        <begin position="149"/>
        <end position="151"/>
    </location>
</feature>
<feature type="strand" evidence="22">
    <location>
        <begin position="153"/>
        <end position="157"/>
    </location>
</feature>
<feature type="helix" evidence="22">
    <location>
        <begin position="158"/>
        <end position="160"/>
    </location>
</feature>
<feature type="strand" evidence="22">
    <location>
        <begin position="174"/>
        <end position="178"/>
    </location>
</feature>
<feature type="strand" evidence="22">
    <location>
        <begin position="187"/>
        <end position="189"/>
    </location>
</feature>
<feature type="strand" evidence="23">
    <location>
        <begin position="191"/>
        <end position="193"/>
    </location>
</feature>
<feature type="strand" evidence="22">
    <location>
        <begin position="196"/>
        <end position="200"/>
    </location>
</feature>
<feature type="strand" evidence="22">
    <location>
        <begin position="206"/>
        <end position="210"/>
    </location>
</feature>
<feature type="helix" evidence="22">
    <location>
        <begin position="217"/>
        <end position="219"/>
    </location>
</feature>
<feature type="strand" evidence="22">
    <location>
        <begin position="220"/>
        <end position="222"/>
    </location>
</feature>
<feature type="strand" evidence="22">
    <location>
        <begin position="224"/>
        <end position="227"/>
    </location>
</feature>
<feature type="strand" evidence="22">
    <location>
        <begin position="234"/>
        <end position="239"/>
    </location>
</feature>
<feature type="strand" evidence="22">
    <location>
        <begin position="246"/>
        <end position="251"/>
    </location>
</feature>
<feature type="strand" evidence="22">
    <location>
        <begin position="254"/>
        <end position="260"/>
    </location>
</feature>
<feature type="strand" evidence="22">
    <location>
        <begin position="266"/>
        <end position="268"/>
    </location>
</feature>
<feature type="strand" evidence="22">
    <location>
        <begin position="270"/>
        <end position="274"/>
    </location>
</feature>
<feature type="strand" evidence="22">
    <location>
        <begin position="280"/>
        <end position="285"/>
    </location>
</feature>
<feature type="strand" evidence="22">
    <location>
        <begin position="292"/>
        <end position="297"/>
    </location>
</feature>
<feature type="strand" evidence="22">
    <location>
        <begin position="300"/>
        <end position="306"/>
    </location>
</feature>
<feature type="helix" evidence="24">
    <location>
        <begin position="307"/>
        <end position="309"/>
    </location>
</feature>
<feature type="strand" evidence="22">
    <location>
        <begin position="314"/>
        <end position="318"/>
    </location>
</feature>
<feature type="strand" evidence="22">
    <location>
        <begin position="324"/>
        <end position="329"/>
    </location>
</feature>
<feature type="strand" evidence="22">
    <location>
        <begin position="336"/>
        <end position="341"/>
    </location>
</feature>
<feature type="strand" evidence="23">
    <location>
        <begin position="342"/>
        <end position="344"/>
    </location>
</feature>
<feature type="strand" evidence="22">
    <location>
        <begin position="347"/>
        <end position="350"/>
    </location>
</feature>
<feature type="helix" evidence="22">
    <location>
        <begin position="351"/>
        <end position="353"/>
    </location>
</feature>
<feature type="helix" evidence="22">
    <location>
        <begin position="360"/>
        <end position="365"/>
    </location>
</feature>
<feature type="strand" evidence="22">
    <location>
        <begin position="370"/>
        <end position="373"/>
    </location>
</feature>
<feature type="strand" evidence="22">
    <location>
        <begin position="381"/>
        <end position="386"/>
    </location>
</feature>
<feature type="strand" evidence="22">
    <location>
        <begin position="388"/>
        <end position="390"/>
    </location>
</feature>
<feature type="strand" evidence="22">
    <location>
        <begin position="393"/>
        <end position="398"/>
    </location>
</feature>
<feature type="strand" evidence="22">
    <location>
        <begin position="401"/>
        <end position="408"/>
    </location>
</feature>
<feature type="helix" evidence="22">
    <location>
        <begin position="410"/>
        <end position="413"/>
    </location>
</feature>
<protein>
    <recommendedName>
        <fullName evidence="18 21">Chromatin assembly factor 1 p55 subunit</fullName>
        <shortName evidence="18">CAF-1 p55 subunit</shortName>
    </recommendedName>
    <alternativeName>
        <fullName evidence="18">CAF-1</fullName>
    </alternativeName>
    <alternativeName>
        <fullName evidence="19">Nucleosome-remodeling factor 55 kDa subunit</fullName>
        <shortName evidence="19">NURF-55</shortName>
    </alternativeName>
</protein>
<keyword id="KW-0002">3D-structure</keyword>
<keyword id="KW-0156">Chromatin regulator</keyword>
<keyword id="KW-0903">Direct protein sequencing</keyword>
<keyword id="KW-0539">Nucleus</keyword>
<keyword id="KW-0597">Phosphoprotein</keyword>
<keyword id="KW-1185">Reference proteome</keyword>
<keyword id="KW-0677">Repeat</keyword>
<keyword id="KW-0678">Repressor</keyword>
<keyword id="KW-0804">Transcription</keyword>
<keyword id="KW-0805">Transcription regulation</keyword>
<keyword id="KW-0853">WD repeat</keyword>
<reference key="1">
    <citation type="journal article" date="1996" name="Mol. Cell. Biol.">
        <title>The p55 subunit of Drosophila chromatin assembly factor 1 is homologous to a histone deacetylase-associated protein.</title>
        <authorList>
            <person name="Tyler J.K."/>
            <person name="Bulger M."/>
            <person name="Kamakaka R.T."/>
            <person name="Kobayashi R."/>
            <person name="Kadonaga J.T."/>
        </authorList>
    </citation>
    <scope>NUCLEOTIDE SEQUENCE [MRNA]</scope>
    <scope>PROTEIN SEQUENCE OF 256-268; 301-313; 322-334 AND 354-376</scope>
    <scope>FUNCTION</scope>
    <scope>SUBCELLULAR LOCATION</scope>
    <scope>DEVELOPMENTAL STAGE</scope>
    <source>
        <strain>Canton-S</strain>
    </source>
</reference>
<reference key="2">
    <citation type="journal article" date="2006" name="Genetics">
        <title>Widespread adaptive evolution of Drosophila genes with sex-biased expression.</title>
        <authorList>
            <person name="Proeschel M."/>
            <person name="Zhang Z."/>
            <person name="Parsch J."/>
        </authorList>
    </citation>
    <scope>NUCLEOTIDE SEQUENCE [GENOMIC DNA]</scope>
    <source>
        <strain>ZBMEL131</strain>
        <strain>ZBMEL145</strain>
        <strain>ZBMEL157</strain>
        <strain>ZBMEL186</strain>
        <strain>ZBMEL191</strain>
        <strain>ZBMEL229</strain>
        <strain>ZBMEL377</strain>
        <strain>ZBMEL384</strain>
        <strain>ZBMEL398</strain>
        <strain>ZBMEL82</strain>
        <strain>ZBMEL84</strain>
        <strain>ZBMEL95</strain>
    </source>
</reference>
<reference key="3">
    <citation type="journal article" date="2000" name="Science">
        <title>The genome sequence of Drosophila melanogaster.</title>
        <authorList>
            <person name="Adams M.D."/>
            <person name="Celniker S.E."/>
            <person name="Holt R.A."/>
            <person name="Evans C.A."/>
            <person name="Gocayne J.D."/>
            <person name="Amanatides P.G."/>
            <person name="Scherer S.E."/>
            <person name="Li P.W."/>
            <person name="Hoskins R.A."/>
            <person name="Galle R.F."/>
            <person name="George R.A."/>
            <person name="Lewis S.E."/>
            <person name="Richards S."/>
            <person name="Ashburner M."/>
            <person name="Henderson S.N."/>
            <person name="Sutton G.G."/>
            <person name="Wortman J.R."/>
            <person name="Yandell M.D."/>
            <person name="Zhang Q."/>
            <person name="Chen L.X."/>
            <person name="Brandon R.C."/>
            <person name="Rogers Y.-H.C."/>
            <person name="Blazej R.G."/>
            <person name="Champe M."/>
            <person name="Pfeiffer B.D."/>
            <person name="Wan K.H."/>
            <person name="Doyle C."/>
            <person name="Baxter E.G."/>
            <person name="Helt G."/>
            <person name="Nelson C.R."/>
            <person name="Miklos G.L.G."/>
            <person name="Abril J.F."/>
            <person name="Agbayani A."/>
            <person name="An H.-J."/>
            <person name="Andrews-Pfannkoch C."/>
            <person name="Baldwin D."/>
            <person name="Ballew R.M."/>
            <person name="Basu A."/>
            <person name="Baxendale J."/>
            <person name="Bayraktaroglu L."/>
            <person name="Beasley E.M."/>
            <person name="Beeson K.Y."/>
            <person name="Benos P.V."/>
            <person name="Berman B.P."/>
            <person name="Bhandari D."/>
            <person name="Bolshakov S."/>
            <person name="Borkova D."/>
            <person name="Botchan M.R."/>
            <person name="Bouck J."/>
            <person name="Brokstein P."/>
            <person name="Brottier P."/>
            <person name="Burtis K.C."/>
            <person name="Busam D.A."/>
            <person name="Butler H."/>
            <person name="Cadieu E."/>
            <person name="Center A."/>
            <person name="Chandra I."/>
            <person name="Cherry J.M."/>
            <person name="Cawley S."/>
            <person name="Dahlke C."/>
            <person name="Davenport L.B."/>
            <person name="Davies P."/>
            <person name="de Pablos B."/>
            <person name="Delcher A."/>
            <person name="Deng Z."/>
            <person name="Mays A.D."/>
            <person name="Dew I."/>
            <person name="Dietz S.M."/>
            <person name="Dodson K."/>
            <person name="Doup L.E."/>
            <person name="Downes M."/>
            <person name="Dugan-Rocha S."/>
            <person name="Dunkov B.C."/>
            <person name="Dunn P."/>
            <person name="Durbin K.J."/>
            <person name="Evangelista C.C."/>
            <person name="Ferraz C."/>
            <person name="Ferriera S."/>
            <person name="Fleischmann W."/>
            <person name="Fosler C."/>
            <person name="Gabrielian A.E."/>
            <person name="Garg N.S."/>
            <person name="Gelbart W.M."/>
            <person name="Glasser K."/>
            <person name="Glodek A."/>
            <person name="Gong F."/>
            <person name="Gorrell J.H."/>
            <person name="Gu Z."/>
            <person name="Guan P."/>
            <person name="Harris M."/>
            <person name="Harris N.L."/>
            <person name="Harvey D.A."/>
            <person name="Heiman T.J."/>
            <person name="Hernandez J.R."/>
            <person name="Houck J."/>
            <person name="Hostin D."/>
            <person name="Houston K.A."/>
            <person name="Howland T.J."/>
            <person name="Wei M.-H."/>
            <person name="Ibegwam C."/>
            <person name="Jalali M."/>
            <person name="Kalush F."/>
            <person name="Karpen G.H."/>
            <person name="Ke Z."/>
            <person name="Kennison J.A."/>
            <person name="Ketchum K.A."/>
            <person name="Kimmel B.E."/>
            <person name="Kodira C.D."/>
            <person name="Kraft C.L."/>
            <person name="Kravitz S."/>
            <person name="Kulp D."/>
            <person name="Lai Z."/>
            <person name="Lasko P."/>
            <person name="Lei Y."/>
            <person name="Levitsky A.A."/>
            <person name="Li J.H."/>
            <person name="Li Z."/>
            <person name="Liang Y."/>
            <person name="Lin X."/>
            <person name="Liu X."/>
            <person name="Mattei B."/>
            <person name="McIntosh T.C."/>
            <person name="McLeod M.P."/>
            <person name="McPherson D."/>
            <person name="Merkulov G."/>
            <person name="Milshina N.V."/>
            <person name="Mobarry C."/>
            <person name="Morris J."/>
            <person name="Moshrefi A."/>
            <person name="Mount S.M."/>
            <person name="Moy M."/>
            <person name="Murphy B."/>
            <person name="Murphy L."/>
            <person name="Muzny D.M."/>
            <person name="Nelson D.L."/>
            <person name="Nelson D.R."/>
            <person name="Nelson K.A."/>
            <person name="Nixon K."/>
            <person name="Nusskern D.R."/>
            <person name="Pacleb J.M."/>
            <person name="Palazzolo M."/>
            <person name="Pittman G.S."/>
            <person name="Pan S."/>
            <person name="Pollard J."/>
            <person name="Puri V."/>
            <person name="Reese M.G."/>
            <person name="Reinert K."/>
            <person name="Remington K."/>
            <person name="Saunders R.D.C."/>
            <person name="Scheeler F."/>
            <person name="Shen H."/>
            <person name="Shue B.C."/>
            <person name="Siden-Kiamos I."/>
            <person name="Simpson M."/>
            <person name="Skupski M.P."/>
            <person name="Smith T.J."/>
            <person name="Spier E."/>
            <person name="Spradling A.C."/>
            <person name="Stapleton M."/>
            <person name="Strong R."/>
            <person name="Sun E."/>
            <person name="Svirskas R."/>
            <person name="Tector C."/>
            <person name="Turner R."/>
            <person name="Venter E."/>
            <person name="Wang A.H."/>
            <person name="Wang X."/>
            <person name="Wang Z.-Y."/>
            <person name="Wassarman D.A."/>
            <person name="Weinstock G.M."/>
            <person name="Weissenbach J."/>
            <person name="Williams S.M."/>
            <person name="Woodage T."/>
            <person name="Worley K.C."/>
            <person name="Wu D."/>
            <person name="Yang S."/>
            <person name="Yao Q.A."/>
            <person name="Ye J."/>
            <person name="Yeh R.-F."/>
            <person name="Zaveri J.S."/>
            <person name="Zhan M."/>
            <person name="Zhang G."/>
            <person name="Zhao Q."/>
            <person name="Zheng L."/>
            <person name="Zheng X.H."/>
            <person name="Zhong F.N."/>
            <person name="Zhong W."/>
            <person name="Zhou X."/>
            <person name="Zhu S.C."/>
            <person name="Zhu X."/>
            <person name="Smith H.O."/>
            <person name="Gibbs R.A."/>
            <person name="Myers E.W."/>
            <person name="Rubin G.M."/>
            <person name="Venter J.C."/>
        </authorList>
    </citation>
    <scope>NUCLEOTIDE SEQUENCE [LARGE SCALE GENOMIC DNA]</scope>
    <source>
        <strain>Berkeley</strain>
    </source>
</reference>
<reference key="4">
    <citation type="journal article" date="2002" name="Genome Biol.">
        <title>Annotation of the Drosophila melanogaster euchromatic genome: a systematic review.</title>
        <authorList>
            <person name="Misra S."/>
            <person name="Crosby M.A."/>
            <person name="Mungall C.J."/>
            <person name="Matthews B.B."/>
            <person name="Campbell K.S."/>
            <person name="Hradecky P."/>
            <person name="Huang Y."/>
            <person name="Kaminker J.S."/>
            <person name="Millburn G.H."/>
            <person name="Prochnik S.E."/>
            <person name="Smith C.D."/>
            <person name="Tupy J.L."/>
            <person name="Whitfield E.J."/>
            <person name="Bayraktaroglu L."/>
            <person name="Berman B.P."/>
            <person name="Bettencourt B.R."/>
            <person name="Celniker S.E."/>
            <person name="de Grey A.D.N.J."/>
            <person name="Drysdale R.A."/>
            <person name="Harris N.L."/>
            <person name="Richter J."/>
            <person name="Russo S."/>
            <person name="Schroeder A.J."/>
            <person name="Shu S.Q."/>
            <person name="Stapleton M."/>
            <person name="Yamada C."/>
            <person name="Ashburner M."/>
            <person name="Gelbart W.M."/>
            <person name="Rubin G.M."/>
            <person name="Lewis S.E."/>
        </authorList>
    </citation>
    <scope>GENOME REANNOTATION</scope>
    <source>
        <strain>Berkeley</strain>
    </source>
</reference>
<reference key="5">
    <citation type="journal article" date="2002" name="Genome Biol.">
        <title>A Drosophila full-length cDNA resource.</title>
        <authorList>
            <person name="Stapleton M."/>
            <person name="Carlson J.W."/>
            <person name="Brokstein P."/>
            <person name="Yu C."/>
            <person name="Champe M."/>
            <person name="George R.A."/>
            <person name="Guarin H."/>
            <person name="Kronmiller B."/>
            <person name="Pacleb J.M."/>
            <person name="Park S."/>
            <person name="Wan K.H."/>
            <person name="Rubin G.M."/>
            <person name="Celniker S.E."/>
        </authorList>
    </citation>
    <scope>NUCLEOTIDE SEQUENCE [LARGE SCALE MRNA]</scope>
    <source>
        <strain>Berkeley</strain>
    </source>
</reference>
<reference key="6">
    <citation type="journal article" date="1998" name="Proc. Natl. Acad. Sci. U.S.A.">
        <title>Drosophila NURF-55, a WD repeat protein involved in histone metabolism.</title>
        <authorList>
            <person name="Martinez-Balbas M.A."/>
            <person name="Tsukiyama T."/>
            <person name="Gdula D."/>
            <person name="Wu C."/>
        </authorList>
    </citation>
    <scope>PROTEIN SEQUENCE OF 64-80; 256-269; 301-310; 314-339 AND 354-368</scope>
    <scope>FUNCTION</scope>
    <scope>IDENTIFICATION IN THE NURF COMPLEX</scope>
    <scope>ASSOCIATION WITH CHROMATIN</scope>
    <scope>SUBCELLULAR LOCATION</scope>
</reference>
<reference key="7">
    <citation type="journal article" date="1995" name="Proc. Natl. Acad. Sci. U.S.A.">
        <title>Assembly of regularly spaced nucleosome arrays by Drosophila chromatin assembly factor 1 and a 56-kDa histone-binding protein.</title>
        <authorList>
            <person name="Bulger M."/>
            <person name="Ito T."/>
            <person name="Kamakaka R.T."/>
            <person name="Kadonaga J.T."/>
        </authorList>
    </citation>
    <scope>CHARACTERIZATION OF THE CAF-1 COMPLEX</scope>
</reference>
<reference key="8">
    <citation type="journal article" date="1996" name="Mol. Cell. Biol.">
        <title>Postreplicative chromatin assembly by Drosophila and human chromatin assembly factor 1.</title>
        <authorList>
            <person name="Kamakaka R.T."/>
            <person name="Bulger M."/>
            <person name="Kaufman P.D."/>
            <person name="Stillman B."/>
            <person name="Kadonaga J.T."/>
        </authorList>
    </citation>
    <scope>CHARACTERIZATION OF THE CAF-1 COMPLEX</scope>
</reference>
<reference key="9">
    <citation type="journal article" date="1998" name="Genes Dev.">
        <title>Inorganic pyrophosphatase is a component of the Drosophila nucleosome remodeling factor complex.</title>
        <authorList>
            <person name="Gdula D.A."/>
            <person name="Sandaltzopoulos R."/>
            <person name="Tsukiyama T."/>
            <person name="Ossipow V."/>
            <person name="Wu C."/>
        </authorList>
    </citation>
    <scope>FUNCTION</scope>
    <scope>INTERACTION WITH ISWI AND NURF-38</scope>
</reference>
<reference key="10">
    <citation type="journal article" date="2001" name="Development">
        <title>The Drosophila polycomb group proteins ESC and E(Z) are present in a complex containing the histone-binding protein p55 and the histone deacetylase RPD3.</title>
        <authorList>
            <person name="Tie F."/>
            <person name="Furuyama T."/>
            <person name="Prasad-Sinha J."/>
            <person name="Jane E."/>
            <person name="Harte P.J."/>
        </authorList>
    </citation>
    <scope>IDENTIFICATION IN AN ESC/E(Z) COMPLEX WITH ESC; E(Z) AND HDAC1</scope>
</reference>
<reference key="11">
    <citation type="journal article" date="2001" name="Mol. Cell. Biol.">
        <title>Interaction between the Drosophila CAF-1 and ASF1 chromatin assembly factors.</title>
        <authorList>
            <person name="Tyler J.K."/>
            <person name="Collins K.A."/>
            <person name="Prasad-Sinha J."/>
            <person name="Amiott E."/>
            <person name="Bulger M."/>
            <person name="Harte P.J."/>
            <person name="Kobayashi R."/>
            <person name="Kadonaga J.T."/>
        </authorList>
    </citation>
    <scope>INTERACTION WITH CAF1-105 AND CAF1-180</scope>
</reference>
<reference key="12">
    <citation type="journal article" date="2002" name="Cell">
        <title>Drosophila Enhancer of zeste/ESC complexes have a histone H3 methyltransferase activity that marks chromosomal Polycomb sites.</title>
        <authorList>
            <person name="Czermin B."/>
            <person name="Melfi R."/>
            <person name="McCabe D."/>
            <person name="Seitz V."/>
            <person name="Imhof A."/>
            <person name="Pirrotta V."/>
        </authorList>
    </citation>
    <scope>IDENTIFICATION IN AN ESC/E(Z) COMPLEX WITH ESC; E(Z); HDAC1 AND SU(Z)12</scope>
</reference>
<reference key="13">
    <citation type="journal article" date="2002" name="Cell">
        <title>Histone methyltransferase activity of a Drosophila Polycomb group repressor complex.</title>
        <authorList>
            <person name="Mueller J."/>
            <person name="Hart C.M."/>
            <person name="Francis N.J."/>
            <person name="Vargas M.L."/>
            <person name="Sengupta A."/>
            <person name="Wild B."/>
            <person name="Miller E.L."/>
            <person name="O'Connor M.B."/>
            <person name="Kingston R.E."/>
            <person name="Simon J.A."/>
        </authorList>
    </citation>
    <scope>IDENTIFICATION IN AN ESC/E(Z) COMPLEX WITH ESC; E(Z) AND SU(Z)12</scope>
</reference>
<reference key="14">
    <citation type="journal article" date="2002" name="Nature">
        <title>Role for a Drosophila Myb-containing protein complex in site-specific DNA replication.</title>
        <authorList>
            <person name="Beall E.L."/>
            <person name="Manak J.R."/>
            <person name="Zhou S."/>
            <person name="Bell M."/>
            <person name="Lipsick J.S."/>
            <person name="Botchan M.R."/>
        </authorList>
    </citation>
    <scope>FUNCTION</scope>
    <scope>IDENTIFICATION BY MASS SPECTROMETRY</scope>
    <scope>IDENTIFICATION IN THE DREAM COMPLEX</scope>
</reference>
<reference key="15">
    <citation type="journal article" date="2003" name="Genesis">
        <title>Polycomb group proteins ESC and E(Z) are present in multiple distinct complexes that undergo dynamic changes during development.</title>
        <authorList>
            <person name="Furuyama T."/>
            <person name="Tie F."/>
            <person name="Harte P.J."/>
        </authorList>
    </citation>
    <scope>IDENTIFICATION IN AN ESC/E(Z) COMPLEX WITH ESC; E(Z) AND HDAC1</scope>
</reference>
<reference key="16">
    <citation type="journal article" date="2003" name="Mol. Cell. Biol.">
        <title>A 1-megadalton ESC/E(Z) complex from Drosophila that contains polycomblike and RPD3.</title>
        <authorList>
            <person name="Tie F."/>
            <person name="Prasad-Sinha J."/>
            <person name="Birve A."/>
            <person name="Rasmuson-Lestander A."/>
            <person name="Harte P.J."/>
        </authorList>
    </citation>
    <scope>IDENTIFICATION IN AN ESC/E(Z) COMPLEX WITH ESC; E(Z); PCL; HDAC1 AND SU(Z)12</scope>
</reference>
<reference key="17">
    <citation type="journal article" date="2004" name="BMC Mol. Biol.">
        <title>The Drosophila methyl-DNA binding protein MBD2/3 interacts with the NuRD complex via p55 and MI-2.</title>
        <authorList>
            <person name="Marhold J."/>
            <person name="Brehm A."/>
            <person name="Kramer K."/>
        </authorList>
    </citation>
    <scope>IDENTIFICATION IN THE NURD COMPLEX</scope>
    <scope>SELF-ASSOCIATION</scope>
</reference>
<reference key="18">
    <citation type="journal article" date="2004" name="Cell">
        <title>Native E2F/RBF complexes contain Myb-interacting proteins and repress transcription of developmentally controlled E2F target genes.</title>
        <authorList>
            <person name="Korenjak M."/>
            <person name="Taylor-Harding B."/>
            <person name="Binne U.K."/>
            <person name="Satterlee J.S."/>
            <person name="Stevaux O."/>
            <person name="Aasland R."/>
            <person name="White-Cooper H."/>
            <person name="Dyson N."/>
            <person name="Brehm A."/>
        </authorList>
    </citation>
    <scope>IDENTIFICATION IN THE DREAM COMPLEX</scope>
</reference>
<reference key="19">
    <citation type="journal article" date="2004" name="Genes Dev.">
        <title>Identification of a Drosophila Myb-E2F2/RBF transcriptional repressor complex.</title>
        <authorList>
            <person name="Lewis P.W."/>
            <person name="Beall E.L."/>
            <person name="Fleischer T.C."/>
            <person name="Georlette D."/>
            <person name="Link A.J."/>
            <person name="Botchan M.R."/>
        </authorList>
    </citation>
    <scope>IDENTIFICATION IN THE DREAM COMPLEX</scope>
</reference>
<reference key="20">
    <citation type="journal article" date="2004" name="Mol. Cell. Biol.">
        <title>p55, the Drosophila ortholog of RbAp46/RbAp48, is required for the repression of dE2F2/RBF-regulated genes.</title>
        <authorList>
            <person name="Taylor-Harding B."/>
            <person name="Binne U.K."/>
            <person name="Korenjak M."/>
            <person name="Brehm A."/>
            <person name="Dyson N.J."/>
        </authorList>
    </citation>
    <scope>FUNCTION</scope>
    <scope>INTERACTION WITH RBF AND RBF2</scope>
</reference>
<reference key="21">
    <citation type="journal article" date="2007" name="Mol. Biosyst.">
        <title>An integrated chemical, mass spectrometric and computational strategy for (quantitative) phosphoproteomics: application to Drosophila melanogaster Kc167 cells.</title>
        <authorList>
            <person name="Bodenmiller B."/>
            <person name="Mueller L.N."/>
            <person name="Pedrioli P.G.A."/>
            <person name="Pflieger D."/>
            <person name="Juenger M.A."/>
            <person name="Eng J.K."/>
            <person name="Aebersold R."/>
            <person name="Tao W.A."/>
        </authorList>
    </citation>
    <scope>PHOSPHORYLATION [LARGE SCALE ANALYSIS] AT SER-11</scope>
    <scope>IDENTIFICATION BY MASS SPECTROMETRY</scope>
</reference>
<reference key="22">
    <citation type="journal article" date="2008" name="J. Proteome Res.">
        <title>Phosphoproteome analysis of Drosophila melanogaster embryos.</title>
        <authorList>
            <person name="Zhai B."/>
            <person name="Villen J."/>
            <person name="Beausoleil S.A."/>
            <person name="Mintseris J."/>
            <person name="Gygi S.P."/>
        </authorList>
    </citation>
    <scope>PHOSPHORYLATION [LARGE SCALE ANALYSIS] AT SER-100</scope>
    <scope>IDENTIFICATION BY MASS SPECTROMETRY</scope>
    <source>
        <tissue>Embryo</tissue>
    </source>
</reference>
<reference key="23">
    <citation type="journal article" date="2012" name="Mol. Cell. Biol.">
        <title>Polycomb repressive complex 2-dependent and -independent functions of Jarid2 in transcriptional regulation in Drosophila.</title>
        <authorList>
            <person name="Herz H.M."/>
            <person name="Mohan M."/>
            <person name="Garrett A.S."/>
            <person name="Miller C."/>
            <person name="Casto D."/>
            <person name="Zhang Y."/>
            <person name="Seidel C."/>
            <person name="Haug J.S."/>
            <person name="Florens L."/>
            <person name="Washburn M.P."/>
            <person name="Yamaguchi M."/>
            <person name="Shiekhattar R."/>
            <person name="Shilatifard A."/>
        </authorList>
    </citation>
    <scope>IDENTIFICATION IN THE PRC2.2 COMPLEX</scope>
    <scope>IDENTIFICATION BY MASS SPECTROMETRY</scope>
</reference>
<comment type="function">
    <text evidence="5 8 15 16 17">Core histone-binding subunit that may target chromatin assembly factors, chromatin remodeling factors and histone deacetylases to their histone substrates in a manner that is regulated by nucleosomal DNA. Component of several complexes which regulate chromatin metabolism. These include the chromatin assembly factor 1 (CAF-1) complex, which is required for chromatin assembly following DNA replication and DNA repair; the nucleosome remodeling and deacetylase complex (the NuRD complex), which promotes transcriptional repression by histone deacetylation and nucleosome remodeling; the nucleosome remodeling factor (NURF) complex, which catalyzes ATP-dependent nucleosome sliding and facilitates transcription of chromatin; and the polycomb group (PcG) repressor complex ESC-E(Z), which promotes repression of homeotic genes during development. Also required for transcriptional repression of E2F target genes by E2f2 and Rbf or Rbf2.</text>
</comment>
<comment type="subunit">
    <text evidence="1 2 3 4 5 6 7 8 9 10 11 14 16 17 20">Probably binds directly to helix 1 of the histone fold of histone H4, a region that is not accessible when H4 is in chromatin (Probable). Self associates (PubMed:15516265). Associates with chromatin (PubMed:9419341). Component of the CAF-1 complex, composed of Caf1-55, Caf1-105 and Caf1-180; within the CAF-1 complex, Caf1-180 interacts directly with both Caf1-55 and Caf1-105 (PubMed:11533245). Component of the NuRD complex, composed of at least Caf1-55, Mi-2, MTA1-like and HDAC1/Rpd3 (PubMed:15516265). Within the NuRD complex, Caf1-55 may interact directly with Mi-2, MTA1-like and HDAC1/Rpd3. The NuRD complex may also associate with the methyl-DNA binding protein MBD-like via Caf1-55 and Mi-2. Component of the NURF complex, composed of Caf1-55, E(bx), Nurf-38 and Iswi (PubMed:9419341, PubMed:9784495). Component of the polycomb repressive complex 2 (PRC2, also known as the Esc/E(Z) complex), composed of Caf1-55, esc, E(z), Su(z)12, and possibly pho (PubMed:11124122, PubMed:12408863, PubMed:12408864, PubMed:12533794, PubMed:12697833). PRC2 associates with the accessory components Jarid2 and jing to form the PRC2 Jarid2-jing variant (PRC2.2) (PubMed:22354997). PRC2 may also associate with Pcl and HDAC1/Rpd3 during early embryogenesis (PubMed:11124122, PubMed:12408863, PubMed:12408864, PubMed:12533794, PubMed:12697833). Interacts with Rbf and Rbf2 (PubMed:15456884). Component of the DREAM complex at least composed of Myb, Caf1-55, mip40, mip120, mip130, E2f2, Dp, Rbf, Rbf2, lin-52, HDAC1/Rpd3 and l(3)mbt (PubMed:12490953, PubMed:15479636, PubMed:15545624).</text>
</comment>
<comment type="interaction">
    <interactant intactId="EBI-75924">
        <id>Q24572</id>
    </interactant>
    <interactant intactId="EBI-129287">
        <id>Q9V6Q2</id>
        <label>cid</label>
    </interactant>
    <organismsDiffer>false</organismsDiffer>
    <experiments>6</experiments>
</comment>
<comment type="interaction">
    <interactant intactId="EBI-75924">
        <id>Q24572</id>
    </interactant>
    <interactant intactId="EBI-112315">
        <id>P42124</id>
        <label>E(z)</label>
    </interactant>
    <organismsDiffer>false</organismsDiffer>
    <experiments>7</experiments>
</comment>
<comment type="interaction">
    <interactant intactId="EBI-75924">
        <id>Q24572</id>
    </interactant>
    <interactant intactId="EBI-88911">
        <id>Q24338</id>
        <label>esc</label>
    </interactant>
    <organismsDiffer>false</organismsDiffer>
    <experiments>11</experiments>
</comment>
<comment type="interaction">
    <interactant intactId="EBI-75924">
        <id>Q24572</id>
    </interactant>
    <interactant intactId="EBI-302197">
        <id>Q94517</id>
        <label>HDAC1</label>
    </interactant>
    <organismsDiffer>false</organismsDiffer>
    <experiments>4</experiments>
</comment>
<comment type="interaction">
    <interactant intactId="EBI-75924">
        <id>Q24572</id>
    </interactant>
    <interactant intactId="EBI-180906">
        <id>Q9VNF6</id>
        <label>MTA1-like</label>
    </interactant>
    <organismsDiffer>false</organismsDiffer>
    <experiments>2</experiments>
</comment>
<comment type="subcellular location">
    <subcellularLocation>
        <location evidence="15 16">Nucleus</location>
    </subcellularLocation>
</comment>
<comment type="developmental stage">
    <text evidence="15">Highest level during early embryogenesis and then decreases in larvae, pupae and adults.</text>
</comment>
<comment type="similarity">
    <text evidence="20">Belongs to the WD repeat RBAP46/RBAP48/MSI1 family.</text>
</comment>